<organism>
    <name type="scientific">Burkholderia mallei (strain SAVP1)</name>
    <dbReference type="NCBI Taxonomy" id="320388"/>
    <lineage>
        <taxon>Bacteria</taxon>
        <taxon>Pseudomonadati</taxon>
        <taxon>Pseudomonadota</taxon>
        <taxon>Betaproteobacteria</taxon>
        <taxon>Burkholderiales</taxon>
        <taxon>Burkholderiaceae</taxon>
        <taxon>Burkholderia</taxon>
        <taxon>pseudomallei group</taxon>
    </lineage>
</organism>
<proteinExistence type="inferred from homology"/>
<keyword id="KW-0030">Aminoacyl-tRNA synthetase</keyword>
<keyword id="KW-0067">ATP-binding</keyword>
<keyword id="KW-0963">Cytoplasm</keyword>
<keyword id="KW-0436">Ligase</keyword>
<keyword id="KW-0547">Nucleotide-binding</keyword>
<keyword id="KW-0648">Protein biosynthesis</keyword>
<gene>
    <name evidence="1" type="primary">aspS</name>
    <name type="ordered locus">BMASAVP1_A2752</name>
</gene>
<comment type="function">
    <text evidence="1">Aspartyl-tRNA synthetase with relaxed tRNA specificity since it is able to aspartylate not only its cognate tRNA(Asp) but also tRNA(Asn). Reaction proceeds in two steps: L-aspartate is first activated by ATP to form Asp-AMP and then transferred to the acceptor end of tRNA(Asp/Asn).</text>
</comment>
<comment type="catalytic activity">
    <reaction evidence="1">
        <text>tRNA(Asx) + L-aspartate + ATP = L-aspartyl-tRNA(Asx) + AMP + diphosphate</text>
        <dbReference type="Rhea" id="RHEA:18349"/>
        <dbReference type="Rhea" id="RHEA-COMP:9710"/>
        <dbReference type="Rhea" id="RHEA-COMP:9711"/>
        <dbReference type="ChEBI" id="CHEBI:29991"/>
        <dbReference type="ChEBI" id="CHEBI:30616"/>
        <dbReference type="ChEBI" id="CHEBI:33019"/>
        <dbReference type="ChEBI" id="CHEBI:78442"/>
        <dbReference type="ChEBI" id="CHEBI:78516"/>
        <dbReference type="ChEBI" id="CHEBI:456215"/>
        <dbReference type="EC" id="6.1.1.23"/>
    </reaction>
</comment>
<comment type="subunit">
    <text evidence="1">Homodimer.</text>
</comment>
<comment type="subcellular location">
    <subcellularLocation>
        <location evidence="1">Cytoplasm</location>
    </subcellularLocation>
</comment>
<comment type="similarity">
    <text evidence="1">Belongs to the class-II aminoacyl-tRNA synthetase family. Type 1 subfamily.</text>
</comment>
<reference key="1">
    <citation type="journal article" date="2010" name="Genome Biol. Evol.">
        <title>Continuing evolution of Burkholderia mallei through genome reduction and large-scale rearrangements.</title>
        <authorList>
            <person name="Losada L."/>
            <person name="Ronning C.M."/>
            <person name="DeShazer D."/>
            <person name="Woods D."/>
            <person name="Fedorova N."/>
            <person name="Kim H.S."/>
            <person name="Shabalina S.A."/>
            <person name="Pearson T.R."/>
            <person name="Brinkac L."/>
            <person name="Tan P."/>
            <person name="Nandi T."/>
            <person name="Crabtree J."/>
            <person name="Badger J."/>
            <person name="Beckstrom-Sternberg S."/>
            <person name="Saqib M."/>
            <person name="Schutzer S.E."/>
            <person name="Keim P."/>
            <person name="Nierman W.C."/>
        </authorList>
    </citation>
    <scope>NUCLEOTIDE SEQUENCE [LARGE SCALE GENOMIC DNA]</scope>
    <source>
        <strain>SAVP1</strain>
    </source>
</reference>
<protein>
    <recommendedName>
        <fullName evidence="1">Aspartate--tRNA(Asp/Asn) ligase</fullName>
        <ecNumber evidence="1">6.1.1.23</ecNumber>
    </recommendedName>
    <alternativeName>
        <fullName evidence="1">Aspartyl-tRNA synthetase</fullName>
        <shortName evidence="1">AspRS</shortName>
    </alternativeName>
    <alternativeName>
        <fullName evidence="1">Non-discriminating aspartyl-tRNA synthetase</fullName>
        <shortName evidence="1">ND-AspRS</shortName>
    </alternativeName>
</protein>
<dbReference type="EC" id="6.1.1.23" evidence="1"/>
<dbReference type="EMBL" id="CP000526">
    <property type="protein sequence ID" value="ABM51058.1"/>
    <property type="molecule type" value="Genomic_DNA"/>
</dbReference>
<dbReference type="RefSeq" id="WP_004189849.1">
    <property type="nucleotide sequence ID" value="NC_008785.1"/>
</dbReference>
<dbReference type="SMR" id="A1V745"/>
<dbReference type="GeneID" id="93059156"/>
<dbReference type="KEGG" id="bmv:BMASAVP1_A2752"/>
<dbReference type="HOGENOM" id="CLU_014330_3_2_4"/>
<dbReference type="GO" id="GO:0005737">
    <property type="term" value="C:cytoplasm"/>
    <property type="evidence" value="ECO:0007669"/>
    <property type="project" value="UniProtKB-SubCell"/>
</dbReference>
<dbReference type="GO" id="GO:0004815">
    <property type="term" value="F:aspartate-tRNA ligase activity"/>
    <property type="evidence" value="ECO:0007669"/>
    <property type="project" value="UniProtKB-UniRule"/>
</dbReference>
<dbReference type="GO" id="GO:0050560">
    <property type="term" value="F:aspartate-tRNA(Asn) ligase activity"/>
    <property type="evidence" value="ECO:0007669"/>
    <property type="project" value="UniProtKB-EC"/>
</dbReference>
<dbReference type="GO" id="GO:0005524">
    <property type="term" value="F:ATP binding"/>
    <property type="evidence" value="ECO:0007669"/>
    <property type="project" value="UniProtKB-UniRule"/>
</dbReference>
<dbReference type="GO" id="GO:0003676">
    <property type="term" value="F:nucleic acid binding"/>
    <property type="evidence" value="ECO:0007669"/>
    <property type="project" value="InterPro"/>
</dbReference>
<dbReference type="GO" id="GO:0006422">
    <property type="term" value="P:aspartyl-tRNA aminoacylation"/>
    <property type="evidence" value="ECO:0007669"/>
    <property type="project" value="UniProtKB-UniRule"/>
</dbReference>
<dbReference type="CDD" id="cd00777">
    <property type="entry name" value="AspRS_core"/>
    <property type="match status" value="1"/>
</dbReference>
<dbReference type="CDD" id="cd04317">
    <property type="entry name" value="EcAspRS_like_N"/>
    <property type="match status" value="1"/>
</dbReference>
<dbReference type="Gene3D" id="3.30.930.10">
    <property type="entry name" value="Bira Bifunctional Protein, Domain 2"/>
    <property type="match status" value="1"/>
</dbReference>
<dbReference type="Gene3D" id="3.30.1360.30">
    <property type="entry name" value="GAD-like domain"/>
    <property type="match status" value="1"/>
</dbReference>
<dbReference type="Gene3D" id="2.40.50.140">
    <property type="entry name" value="Nucleic acid-binding proteins"/>
    <property type="match status" value="1"/>
</dbReference>
<dbReference type="HAMAP" id="MF_00044">
    <property type="entry name" value="Asp_tRNA_synth_type1"/>
    <property type="match status" value="1"/>
</dbReference>
<dbReference type="InterPro" id="IPR004364">
    <property type="entry name" value="Aa-tRNA-synt_II"/>
</dbReference>
<dbReference type="InterPro" id="IPR006195">
    <property type="entry name" value="aa-tRNA-synth_II"/>
</dbReference>
<dbReference type="InterPro" id="IPR045864">
    <property type="entry name" value="aa-tRNA-synth_II/BPL/LPL"/>
</dbReference>
<dbReference type="InterPro" id="IPR004524">
    <property type="entry name" value="Asp-tRNA-ligase_1"/>
</dbReference>
<dbReference type="InterPro" id="IPR047089">
    <property type="entry name" value="Asp-tRNA-ligase_1_N"/>
</dbReference>
<dbReference type="InterPro" id="IPR002312">
    <property type="entry name" value="Asp/Asn-tRNA-synth_IIb"/>
</dbReference>
<dbReference type="InterPro" id="IPR047090">
    <property type="entry name" value="AspRS_core"/>
</dbReference>
<dbReference type="InterPro" id="IPR004115">
    <property type="entry name" value="GAD-like_sf"/>
</dbReference>
<dbReference type="InterPro" id="IPR029351">
    <property type="entry name" value="GAD_dom"/>
</dbReference>
<dbReference type="InterPro" id="IPR012340">
    <property type="entry name" value="NA-bd_OB-fold"/>
</dbReference>
<dbReference type="InterPro" id="IPR004365">
    <property type="entry name" value="NA-bd_OB_tRNA"/>
</dbReference>
<dbReference type="NCBIfam" id="TIGR00459">
    <property type="entry name" value="aspS_bact"/>
    <property type="match status" value="1"/>
</dbReference>
<dbReference type="NCBIfam" id="NF001750">
    <property type="entry name" value="PRK00476.1"/>
    <property type="match status" value="1"/>
</dbReference>
<dbReference type="PANTHER" id="PTHR22594:SF5">
    <property type="entry name" value="ASPARTATE--TRNA LIGASE, MITOCHONDRIAL"/>
    <property type="match status" value="1"/>
</dbReference>
<dbReference type="PANTHER" id="PTHR22594">
    <property type="entry name" value="ASPARTYL/LYSYL-TRNA SYNTHETASE"/>
    <property type="match status" value="1"/>
</dbReference>
<dbReference type="Pfam" id="PF02938">
    <property type="entry name" value="GAD"/>
    <property type="match status" value="1"/>
</dbReference>
<dbReference type="Pfam" id="PF00152">
    <property type="entry name" value="tRNA-synt_2"/>
    <property type="match status" value="1"/>
</dbReference>
<dbReference type="Pfam" id="PF01336">
    <property type="entry name" value="tRNA_anti-codon"/>
    <property type="match status" value="1"/>
</dbReference>
<dbReference type="PRINTS" id="PR01042">
    <property type="entry name" value="TRNASYNTHASP"/>
</dbReference>
<dbReference type="SUPFAM" id="SSF55681">
    <property type="entry name" value="Class II aaRS and biotin synthetases"/>
    <property type="match status" value="1"/>
</dbReference>
<dbReference type="SUPFAM" id="SSF55261">
    <property type="entry name" value="GAD domain-like"/>
    <property type="match status" value="1"/>
</dbReference>
<dbReference type="SUPFAM" id="SSF50249">
    <property type="entry name" value="Nucleic acid-binding proteins"/>
    <property type="match status" value="1"/>
</dbReference>
<dbReference type="PROSITE" id="PS50862">
    <property type="entry name" value="AA_TRNA_LIGASE_II"/>
    <property type="match status" value="1"/>
</dbReference>
<evidence type="ECO:0000255" key="1">
    <source>
        <dbReference type="HAMAP-Rule" id="MF_00044"/>
    </source>
</evidence>
<sequence length="600" mass="67680">MSMRTEYCGLVTEHLLGQTVSLCGWVHRRRDHGGVIFIDLRDREGLVQVVCDPDRAEMFAAAEGVRNEFCIQVKGLVRGRPEGTINAGLKSGRIEVLCHELNVLNASVTPPFQLDDDNLSETTRLTHRVLDLRRPQMQHNLRLRYRVAIEARKYLDEQGFIDIETPMLTKSTPEGARDYLVPSRVNAGQFFALPQSPQLFKQLLMVANFDRYYQITKCFRDEDLRADRQPEFTQIDCETSFLGEQEIRDLFEDMIRHIFKTTIGVELDATFPVMPYSEAMARFGSDKPDLRVKLEFTELTDAMKDVDFKVFSTPANTKDGRVAALRVPKGGELTRGDIDGYTEFVRIYGAKGLAWIKVNERAKGRDGLQSPIVKNLHDASIAAILERTGAQDGDIIFFAADRAKVVNDSLGALRLKIGHSEFGKANGLVEAGWKPLWVVDFPMFEYDDEEARYVAAHHPFTSPKDEHLEYLETDPGRCLAKAYDMVLNGWEIGGGSVRIHREEVQSKVFRALKIGPEEAQAKFGFLLDALQYGAPPHGGIAFGLDRIVTMMAGADSIRDVIAFPKTQRAQCLLTQAPSPVDERQLRELHIRLRQPEQPKA</sequence>
<accession>A1V745</accession>
<name>SYDND_BURMS</name>
<feature type="chain" id="PRO_1000006649" description="Aspartate--tRNA(Asp/Asn) ligase">
    <location>
        <begin position="1"/>
        <end position="600"/>
    </location>
</feature>
<feature type="region of interest" description="Aspartate" evidence="1">
    <location>
        <begin position="198"/>
        <end position="201"/>
    </location>
</feature>
<feature type="binding site" evidence="1">
    <location>
        <position position="174"/>
    </location>
    <ligand>
        <name>L-aspartate</name>
        <dbReference type="ChEBI" id="CHEBI:29991"/>
    </ligand>
</feature>
<feature type="binding site" evidence="1">
    <location>
        <begin position="220"/>
        <end position="222"/>
    </location>
    <ligand>
        <name>ATP</name>
        <dbReference type="ChEBI" id="CHEBI:30616"/>
    </ligand>
</feature>
<feature type="binding site" evidence="1">
    <location>
        <position position="220"/>
    </location>
    <ligand>
        <name>L-aspartate</name>
        <dbReference type="ChEBI" id="CHEBI:29991"/>
    </ligand>
</feature>
<feature type="binding site" evidence="1">
    <location>
        <position position="229"/>
    </location>
    <ligand>
        <name>ATP</name>
        <dbReference type="ChEBI" id="CHEBI:30616"/>
    </ligand>
</feature>
<feature type="binding site" evidence="1">
    <location>
        <position position="457"/>
    </location>
    <ligand>
        <name>L-aspartate</name>
        <dbReference type="ChEBI" id="CHEBI:29991"/>
    </ligand>
</feature>
<feature type="binding site" evidence="1">
    <location>
        <position position="491"/>
    </location>
    <ligand>
        <name>ATP</name>
        <dbReference type="ChEBI" id="CHEBI:30616"/>
    </ligand>
</feature>
<feature type="binding site" evidence="1">
    <location>
        <position position="498"/>
    </location>
    <ligand>
        <name>L-aspartate</name>
        <dbReference type="ChEBI" id="CHEBI:29991"/>
    </ligand>
</feature>
<feature type="binding site" evidence="1">
    <location>
        <begin position="543"/>
        <end position="546"/>
    </location>
    <ligand>
        <name>ATP</name>
        <dbReference type="ChEBI" id="CHEBI:30616"/>
    </ligand>
</feature>
<feature type="site" description="Important for tRNA non-discrimination" evidence="1">
    <location>
        <position position="32"/>
    </location>
</feature>
<feature type="site" description="Important for tRNA non-discrimination" evidence="1">
    <location>
        <position position="83"/>
    </location>
</feature>